<protein>
    <recommendedName>
        <fullName evidence="1">Polyisoprenyl-teichoic acid--peptidoglycan teichoic acid transferase TagU</fullName>
        <ecNumber evidence="1">2.7.8.-</ecNumber>
    </recommendedName>
</protein>
<organism>
    <name type="scientific">Halalkalibacterium halodurans (strain ATCC BAA-125 / DSM 18197 / FERM 7344 / JCM 9153 / C-125)</name>
    <name type="common">Bacillus halodurans</name>
    <dbReference type="NCBI Taxonomy" id="272558"/>
    <lineage>
        <taxon>Bacteria</taxon>
        <taxon>Bacillati</taxon>
        <taxon>Bacillota</taxon>
        <taxon>Bacilli</taxon>
        <taxon>Bacillales</taxon>
        <taxon>Bacillaceae</taxon>
        <taxon>Halalkalibacterium (ex Joshi et al. 2022)</taxon>
    </lineage>
</organism>
<sequence length="304" mass="33590">MKKALIAIGLILGTITVAIIGYGIYLYSSIQNTAGEMHEPLDRGDKSDKRDVAFDISAQDPFSILIAGVDSREDTHAGRSDTLIVLTVNPKEESIKMLSIPRDTRTEIVGRGTDDKINHAYAFGGAQMTIDTVENFLDIPIDHYVSINMDGFTQLVDALGGVSVENSFAFSQNGYQFEEGEIFLETGDEALAYARMRKQDSRGDFGRNDRQRQIVEAVIKQSAQFSSITKAGAILDAVGESVRTDLQLDGMWELQSNYRGAAKNIEQLEITGEGTRINNIYYLIIPQEEIARVQGELKSHLELS</sequence>
<comment type="function">
    <text evidence="1">May catalyze the final step in cell wall teichoic acid biosynthesis, the transfer of the anionic cell wall polymers (APs) from their lipid-linked precursor to the cell wall peptidoglycan (PG).</text>
</comment>
<comment type="pathway">
    <text evidence="1">Cell wall biogenesis.</text>
</comment>
<comment type="subcellular location">
    <subcellularLocation>
        <location evidence="1">Cell membrane</location>
        <topology evidence="1">Single-pass type II membrane protein</topology>
    </subcellularLocation>
</comment>
<comment type="similarity">
    <text evidence="1">Belongs to the LytR/CpsA/Psr (LCP) family.</text>
</comment>
<reference key="1">
    <citation type="journal article" date="2000" name="Nucleic Acids Res.">
        <title>Complete genome sequence of the alkaliphilic bacterium Bacillus halodurans and genomic sequence comparison with Bacillus subtilis.</title>
        <authorList>
            <person name="Takami H."/>
            <person name="Nakasone K."/>
            <person name="Takaki Y."/>
            <person name="Maeno G."/>
            <person name="Sasaki R."/>
            <person name="Masui N."/>
            <person name="Fuji F."/>
            <person name="Hirama C."/>
            <person name="Nakamura Y."/>
            <person name="Ogasawara N."/>
            <person name="Kuhara S."/>
            <person name="Horikoshi K."/>
        </authorList>
    </citation>
    <scope>NUCLEOTIDE SEQUENCE [LARGE SCALE GENOMIC DNA]</scope>
    <source>
        <strain>ATCC BAA-125 / DSM 18197 / FERM 7344 / JCM 9153 / C-125</strain>
    </source>
</reference>
<name>TAGU_HALH5</name>
<accession>Q9K6Q8</accession>
<proteinExistence type="inferred from homology"/>
<keyword id="KW-1003">Cell membrane</keyword>
<keyword id="KW-0961">Cell wall biogenesis/degradation</keyword>
<keyword id="KW-0472">Membrane</keyword>
<keyword id="KW-1185">Reference proteome</keyword>
<keyword id="KW-0735">Signal-anchor</keyword>
<keyword id="KW-0808">Transferase</keyword>
<keyword id="KW-0812">Transmembrane</keyword>
<keyword id="KW-1133">Transmembrane helix</keyword>
<dbReference type="EC" id="2.7.8.-" evidence="1"/>
<dbReference type="EMBL" id="BA000004">
    <property type="protein sequence ID" value="BAB07389.1"/>
    <property type="molecule type" value="Genomic_DNA"/>
</dbReference>
<dbReference type="PIR" id="F84108">
    <property type="entry name" value="F84108"/>
</dbReference>
<dbReference type="RefSeq" id="WP_010899796.1">
    <property type="nucleotide sequence ID" value="NC_002570.2"/>
</dbReference>
<dbReference type="SMR" id="Q9K6Q8"/>
<dbReference type="STRING" id="272558.gene:10729583"/>
<dbReference type="KEGG" id="bha:BH3670"/>
<dbReference type="eggNOG" id="COG1316">
    <property type="taxonomic scope" value="Bacteria"/>
</dbReference>
<dbReference type="HOGENOM" id="CLU_016455_2_2_9"/>
<dbReference type="OrthoDB" id="27330at2"/>
<dbReference type="Proteomes" id="UP000001258">
    <property type="component" value="Chromosome"/>
</dbReference>
<dbReference type="GO" id="GO:0005886">
    <property type="term" value="C:plasma membrane"/>
    <property type="evidence" value="ECO:0007669"/>
    <property type="project" value="UniProtKB-SubCell"/>
</dbReference>
<dbReference type="GO" id="GO:0016780">
    <property type="term" value="F:phosphotransferase activity, for other substituted phosphate groups"/>
    <property type="evidence" value="ECO:0007669"/>
    <property type="project" value="UniProtKB-UniRule"/>
</dbReference>
<dbReference type="GO" id="GO:0070726">
    <property type="term" value="P:cell wall assembly"/>
    <property type="evidence" value="ECO:0007669"/>
    <property type="project" value="UniProtKB-UniRule"/>
</dbReference>
<dbReference type="Gene3D" id="3.40.630.190">
    <property type="entry name" value="LCP protein"/>
    <property type="match status" value="1"/>
</dbReference>
<dbReference type="HAMAP" id="MF_01140">
    <property type="entry name" value="TagU_transferase"/>
    <property type="match status" value="1"/>
</dbReference>
<dbReference type="InterPro" id="IPR050922">
    <property type="entry name" value="LytR/CpsA/Psr_CW_biosynth"/>
</dbReference>
<dbReference type="InterPro" id="IPR004474">
    <property type="entry name" value="LytR_CpsA_psr"/>
</dbReference>
<dbReference type="InterPro" id="IPR023734">
    <property type="entry name" value="TagU"/>
</dbReference>
<dbReference type="NCBIfam" id="TIGR00350">
    <property type="entry name" value="lytR_cpsA_psr"/>
    <property type="match status" value="1"/>
</dbReference>
<dbReference type="PANTHER" id="PTHR33392">
    <property type="entry name" value="POLYISOPRENYL-TEICHOIC ACID--PEPTIDOGLYCAN TEICHOIC ACID TRANSFERASE TAGU"/>
    <property type="match status" value="1"/>
</dbReference>
<dbReference type="PANTHER" id="PTHR33392:SF6">
    <property type="entry name" value="POLYISOPRENYL-TEICHOIC ACID--PEPTIDOGLYCAN TEICHOIC ACID TRANSFERASE TAGU"/>
    <property type="match status" value="1"/>
</dbReference>
<dbReference type="Pfam" id="PF03816">
    <property type="entry name" value="LytR_cpsA_psr"/>
    <property type="match status" value="1"/>
</dbReference>
<feature type="chain" id="PRO_0000218497" description="Polyisoprenyl-teichoic acid--peptidoglycan teichoic acid transferase TagU">
    <location>
        <begin position="1"/>
        <end position="304"/>
    </location>
</feature>
<feature type="topological domain" description="Cytoplasmic" evidence="1">
    <location>
        <begin position="1"/>
        <end position="3"/>
    </location>
</feature>
<feature type="transmembrane region" description="Helical; Signal-anchor for type II membrane protein" evidence="1">
    <location>
        <begin position="4"/>
        <end position="24"/>
    </location>
</feature>
<feature type="topological domain" description="Extracellular" evidence="1">
    <location>
        <begin position="25"/>
        <end position="304"/>
    </location>
</feature>
<evidence type="ECO:0000255" key="1">
    <source>
        <dbReference type="HAMAP-Rule" id="MF_01140"/>
    </source>
</evidence>
<gene>
    <name evidence="1" type="primary">tagU</name>
    <name type="ordered locus">BH3670</name>
</gene>